<organism>
    <name type="scientific">Saccharomyces paradoxus</name>
    <name type="common">Yeast</name>
    <name type="synonym">Saccharomyces douglasii</name>
    <dbReference type="NCBI Taxonomy" id="27291"/>
    <lineage>
        <taxon>Eukaryota</taxon>
        <taxon>Fungi</taxon>
        <taxon>Dikarya</taxon>
        <taxon>Ascomycota</taxon>
        <taxon>Saccharomycotina</taxon>
        <taxon>Saccharomycetes</taxon>
        <taxon>Saccharomycetales</taxon>
        <taxon>Saccharomycetaceae</taxon>
        <taxon>Saccharomyces</taxon>
    </lineage>
</organism>
<keyword id="KW-0138">CF(0)</keyword>
<keyword id="KW-0291">Formylation</keyword>
<keyword id="KW-0375">Hydrogen ion transport</keyword>
<keyword id="KW-0406">Ion transport</keyword>
<keyword id="KW-0446">Lipid-binding</keyword>
<keyword id="KW-0472">Membrane</keyword>
<keyword id="KW-0496">Mitochondrion</keyword>
<keyword id="KW-0812">Transmembrane</keyword>
<keyword id="KW-1133">Transmembrane helix</keyword>
<keyword id="KW-0813">Transport</keyword>
<protein>
    <recommendedName>
        <fullName>ATP synthase subunit 9, mitochondrial</fullName>
    </recommendedName>
    <alternativeName>
        <fullName>Lipid-binding protein</fullName>
    </alternativeName>
</protein>
<gene>
    <name type="primary">ATP9</name>
    <name type="synonym">OLI1</name>
    <name type="synonym">PHO2</name>
</gene>
<evidence type="ECO:0000250" key="1"/>
<evidence type="ECO:0000255" key="2"/>
<evidence type="ECO:0000305" key="3"/>
<feature type="chain" id="PRO_0000112238" description="ATP synthase subunit 9, mitochondrial">
    <location>
        <begin position="1"/>
        <end position="76"/>
    </location>
</feature>
<feature type="transmembrane region" description="Helical" evidence="2">
    <location>
        <begin position="14"/>
        <end position="34"/>
    </location>
</feature>
<feature type="transmembrane region" description="Helical" evidence="2">
    <location>
        <begin position="52"/>
        <end position="72"/>
    </location>
</feature>
<feature type="site" description="Reversibly protonated during proton transport" evidence="1">
    <location>
        <position position="59"/>
    </location>
</feature>
<feature type="modified residue" description="N-formylmethionine" evidence="1">
    <location>
        <position position="1"/>
    </location>
</feature>
<reference key="1">
    <citation type="journal article" date="1994" name="Curr. Genet.">
        <title>Comparative analysis of the region of the mitochondrial genome containing the ATPase subunit 9 gene in the two related yeast species Saccharomyces douglasii and Saccharomyces cerevisiae.</title>
        <authorList>
            <person name="Nicoletti L."/>
            <person name="Laveder P."/>
            <person name="Pellizzari R."/>
            <person name="Cardazzo B."/>
            <person name="Carignani G."/>
        </authorList>
    </citation>
    <scope>NUCLEOTIDE SEQUENCE [GENOMIC DNA]</scope>
    <source>
        <strain>4707-22D</strain>
    </source>
</reference>
<sequence>MQLVLAAKYIGAGISTIGLLGAGIGIAIVFAALINGVSRNPSIKDTVFPMAILGFALSEATGLFCLMVSFLLLFGV</sequence>
<name>ATP9_SACPA</name>
<dbReference type="EMBL" id="Z25399">
    <property type="protein sequence ID" value="CAA80904.1"/>
    <property type="molecule type" value="Genomic_DNA"/>
</dbReference>
<dbReference type="RefSeq" id="YP_006460239.1">
    <property type="nucleotide sequence ID" value="NC_018044.1"/>
</dbReference>
<dbReference type="SMR" id="P61828"/>
<dbReference type="GeneID" id="13080284"/>
<dbReference type="KEGG" id="spao:A560_p05"/>
<dbReference type="OrthoDB" id="438052at2759"/>
<dbReference type="GO" id="GO:0031966">
    <property type="term" value="C:mitochondrial membrane"/>
    <property type="evidence" value="ECO:0007669"/>
    <property type="project" value="UniProtKB-SubCell"/>
</dbReference>
<dbReference type="GO" id="GO:0045259">
    <property type="term" value="C:proton-transporting ATP synthase complex"/>
    <property type="evidence" value="ECO:0007669"/>
    <property type="project" value="UniProtKB-KW"/>
</dbReference>
<dbReference type="GO" id="GO:0033177">
    <property type="term" value="C:proton-transporting two-sector ATPase complex, proton-transporting domain"/>
    <property type="evidence" value="ECO:0007669"/>
    <property type="project" value="InterPro"/>
</dbReference>
<dbReference type="GO" id="GO:0008289">
    <property type="term" value="F:lipid binding"/>
    <property type="evidence" value="ECO:0007669"/>
    <property type="project" value="UniProtKB-KW"/>
</dbReference>
<dbReference type="GO" id="GO:0015078">
    <property type="term" value="F:proton transmembrane transporter activity"/>
    <property type="evidence" value="ECO:0007669"/>
    <property type="project" value="InterPro"/>
</dbReference>
<dbReference type="GO" id="GO:0015986">
    <property type="term" value="P:proton motive force-driven ATP synthesis"/>
    <property type="evidence" value="ECO:0007669"/>
    <property type="project" value="InterPro"/>
</dbReference>
<dbReference type="CDD" id="cd18182">
    <property type="entry name" value="ATP-synt_Fo_c_ATP5G3"/>
    <property type="match status" value="1"/>
</dbReference>
<dbReference type="FunFam" id="1.20.20.10:FF:000014">
    <property type="entry name" value="ATP synthase subunit 9, mitochondrial"/>
    <property type="match status" value="1"/>
</dbReference>
<dbReference type="Gene3D" id="1.20.20.10">
    <property type="entry name" value="F1F0 ATP synthase subunit C"/>
    <property type="match status" value="1"/>
</dbReference>
<dbReference type="HAMAP" id="MF_01396">
    <property type="entry name" value="ATP_synth_c_bact"/>
    <property type="match status" value="1"/>
</dbReference>
<dbReference type="InterPro" id="IPR000454">
    <property type="entry name" value="ATP_synth_F0_csu"/>
</dbReference>
<dbReference type="InterPro" id="IPR020537">
    <property type="entry name" value="ATP_synth_F0_csu_DDCD_BS"/>
</dbReference>
<dbReference type="InterPro" id="IPR038662">
    <property type="entry name" value="ATP_synth_F0_csu_sf"/>
</dbReference>
<dbReference type="InterPro" id="IPR002379">
    <property type="entry name" value="ATPase_proteolipid_c-like_dom"/>
</dbReference>
<dbReference type="InterPro" id="IPR035921">
    <property type="entry name" value="F/V-ATP_Csub_sf"/>
</dbReference>
<dbReference type="PANTHER" id="PTHR10031">
    <property type="entry name" value="ATP SYNTHASE LIPID-BINDING PROTEIN, MITOCHONDRIAL"/>
    <property type="match status" value="1"/>
</dbReference>
<dbReference type="PANTHER" id="PTHR10031:SF0">
    <property type="entry name" value="ATPASE PROTEIN 9"/>
    <property type="match status" value="1"/>
</dbReference>
<dbReference type="Pfam" id="PF00137">
    <property type="entry name" value="ATP-synt_C"/>
    <property type="match status" value="1"/>
</dbReference>
<dbReference type="PRINTS" id="PR00124">
    <property type="entry name" value="ATPASEC"/>
</dbReference>
<dbReference type="SUPFAM" id="SSF81333">
    <property type="entry name" value="F1F0 ATP synthase subunit C"/>
    <property type="match status" value="1"/>
</dbReference>
<dbReference type="PROSITE" id="PS00605">
    <property type="entry name" value="ATPASE_C"/>
    <property type="match status" value="1"/>
</dbReference>
<comment type="function">
    <text>Mitochondrial membrane ATP synthase (F(1)F(0) ATP synthase or Complex V) produces ATP from ADP in the presence of a proton gradient across the membrane which is generated by electron transport complexes of the respiratory chain. F-type ATPases consist of two structural domains, F(1) - containing the extramembraneous catalytic core and F(0) - containing the membrane proton channel, linked together by a central stalk and a peripheral stalk. During catalysis, ATP synthesis in the catalytic domain of F(1) is coupled via a rotary mechanism of the central stalk subunits to proton translocation. Part of the complex F(0) domain. A homomeric c-ring of probably 10 subunits is part of the complex rotary element.</text>
</comment>
<comment type="subunit">
    <text>F-type ATPases have 2 components, CF(1) - the catalytic core - and CF(0) - the membrane proton channel. In yeast, the dimeric form of ATP synthase consists of 18 polypeptides: alpha, beta, gamma, delta, epsilon, 4 (B), 5 (OSCP), 6 (A), 8, 9 (C), d, E (Tim11), f, g, h, i, j and k.</text>
</comment>
<comment type="subcellular location">
    <subcellularLocation>
        <location evidence="3">Mitochondrion membrane</location>
        <topology evidence="3">Multi-pass membrane protein</topology>
    </subcellularLocation>
</comment>
<comment type="similarity">
    <text evidence="3">Belongs to the ATPase C chain family.</text>
</comment>
<proteinExistence type="inferred from homology"/>
<accession>P61828</accession>
<accession>P00841</accession>
<accession>Q37750</accession>
<geneLocation type="mitochondrion"/>